<feature type="chain" id="PRO_1000121008" description="Large ribosomal subunit protein uL10">
    <location>
        <begin position="1"/>
        <end position="165"/>
    </location>
</feature>
<proteinExistence type="inferred from homology"/>
<protein>
    <recommendedName>
        <fullName evidence="1">Large ribosomal subunit protein uL10</fullName>
    </recommendedName>
    <alternativeName>
        <fullName evidence="2">50S ribosomal protein L10</fullName>
    </alternativeName>
</protein>
<accession>B5QYD6</accession>
<keyword id="KW-0687">Ribonucleoprotein</keyword>
<keyword id="KW-0689">Ribosomal protein</keyword>
<keyword id="KW-0694">RNA-binding</keyword>
<keyword id="KW-0699">rRNA-binding</keyword>
<organism>
    <name type="scientific">Salmonella enteritidis PT4 (strain P125109)</name>
    <dbReference type="NCBI Taxonomy" id="550537"/>
    <lineage>
        <taxon>Bacteria</taxon>
        <taxon>Pseudomonadati</taxon>
        <taxon>Pseudomonadota</taxon>
        <taxon>Gammaproteobacteria</taxon>
        <taxon>Enterobacterales</taxon>
        <taxon>Enterobacteriaceae</taxon>
        <taxon>Salmonella</taxon>
    </lineage>
</organism>
<dbReference type="EMBL" id="AM933172">
    <property type="protein sequence ID" value="CAR35506.1"/>
    <property type="molecule type" value="Genomic_DNA"/>
</dbReference>
<dbReference type="RefSeq" id="WP_001207203.1">
    <property type="nucleotide sequence ID" value="NC_011294.1"/>
</dbReference>
<dbReference type="GeneID" id="93756505"/>
<dbReference type="KEGG" id="set:SEN3935"/>
<dbReference type="HOGENOM" id="CLU_092227_0_2_6"/>
<dbReference type="Proteomes" id="UP000000613">
    <property type="component" value="Chromosome"/>
</dbReference>
<dbReference type="GO" id="GO:0015934">
    <property type="term" value="C:large ribosomal subunit"/>
    <property type="evidence" value="ECO:0007669"/>
    <property type="project" value="InterPro"/>
</dbReference>
<dbReference type="GO" id="GO:0070180">
    <property type="term" value="F:large ribosomal subunit rRNA binding"/>
    <property type="evidence" value="ECO:0007669"/>
    <property type="project" value="UniProtKB-UniRule"/>
</dbReference>
<dbReference type="GO" id="GO:0003735">
    <property type="term" value="F:structural constituent of ribosome"/>
    <property type="evidence" value="ECO:0007669"/>
    <property type="project" value="InterPro"/>
</dbReference>
<dbReference type="GO" id="GO:0006412">
    <property type="term" value="P:translation"/>
    <property type="evidence" value="ECO:0007669"/>
    <property type="project" value="UniProtKB-UniRule"/>
</dbReference>
<dbReference type="CDD" id="cd05797">
    <property type="entry name" value="Ribosomal_L10"/>
    <property type="match status" value="1"/>
</dbReference>
<dbReference type="FunFam" id="3.30.70.1730:FF:000001">
    <property type="entry name" value="50S ribosomal protein L10"/>
    <property type="match status" value="1"/>
</dbReference>
<dbReference type="Gene3D" id="3.30.70.1730">
    <property type="match status" value="1"/>
</dbReference>
<dbReference type="Gene3D" id="6.10.250.2350">
    <property type="match status" value="1"/>
</dbReference>
<dbReference type="HAMAP" id="MF_00362">
    <property type="entry name" value="Ribosomal_uL10"/>
    <property type="match status" value="1"/>
</dbReference>
<dbReference type="InterPro" id="IPR001790">
    <property type="entry name" value="Ribosomal_uL10"/>
</dbReference>
<dbReference type="InterPro" id="IPR043141">
    <property type="entry name" value="Ribosomal_uL10-like_sf"/>
</dbReference>
<dbReference type="InterPro" id="IPR022973">
    <property type="entry name" value="Ribosomal_uL10_bac"/>
</dbReference>
<dbReference type="InterPro" id="IPR047865">
    <property type="entry name" value="Ribosomal_uL10_bac_type"/>
</dbReference>
<dbReference type="InterPro" id="IPR002363">
    <property type="entry name" value="Ribosomal_uL10_CS_bac"/>
</dbReference>
<dbReference type="NCBIfam" id="NF000955">
    <property type="entry name" value="PRK00099.1-1"/>
    <property type="match status" value="1"/>
</dbReference>
<dbReference type="PANTHER" id="PTHR11560">
    <property type="entry name" value="39S RIBOSOMAL PROTEIN L10, MITOCHONDRIAL"/>
    <property type="match status" value="1"/>
</dbReference>
<dbReference type="Pfam" id="PF00466">
    <property type="entry name" value="Ribosomal_L10"/>
    <property type="match status" value="1"/>
</dbReference>
<dbReference type="SUPFAM" id="SSF160369">
    <property type="entry name" value="Ribosomal protein L10-like"/>
    <property type="match status" value="1"/>
</dbReference>
<dbReference type="PROSITE" id="PS01109">
    <property type="entry name" value="RIBOSOMAL_L10"/>
    <property type="match status" value="1"/>
</dbReference>
<gene>
    <name evidence="1" type="primary">rplJ</name>
    <name type="ordered locus">SEN3935</name>
</gene>
<reference key="1">
    <citation type="journal article" date="2008" name="Genome Res.">
        <title>Comparative genome analysis of Salmonella enteritidis PT4 and Salmonella gallinarum 287/91 provides insights into evolutionary and host adaptation pathways.</title>
        <authorList>
            <person name="Thomson N.R."/>
            <person name="Clayton D.J."/>
            <person name="Windhorst D."/>
            <person name="Vernikos G."/>
            <person name="Davidson S."/>
            <person name="Churcher C."/>
            <person name="Quail M.A."/>
            <person name="Stevens M."/>
            <person name="Jones M.A."/>
            <person name="Watson M."/>
            <person name="Barron A."/>
            <person name="Layton A."/>
            <person name="Pickard D."/>
            <person name="Kingsley R.A."/>
            <person name="Bignell A."/>
            <person name="Clark L."/>
            <person name="Harris B."/>
            <person name="Ormond D."/>
            <person name="Abdellah Z."/>
            <person name="Brooks K."/>
            <person name="Cherevach I."/>
            <person name="Chillingworth T."/>
            <person name="Woodward J."/>
            <person name="Norberczak H."/>
            <person name="Lord A."/>
            <person name="Arrowsmith C."/>
            <person name="Jagels K."/>
            <person name="Moule S."/>
            <person name="Mungall K."/>
            <person name="Saunders M."/>
            <person name="Whitehead S."/>
            <person name="Chabalgoity J.A."/>
            <person name="Maskell D."/>
            <person name="Humphreys T."/>
            <person name="Roberts M."/>
            <person name="Barrow P.A."/>
            <person name="Dougan G."/>
            <person name="Parkhill J."/>
        </authorList>
    </citation>
    <scope>NUCLEOTIDE SEQUENCE [LARGE SCALE GENOMIC DNA]</scope>
    <source>
        <strain>P125109</strain>
    </source>
</reference>
<sequence length="165" mass="17801">MALNLQDKQAIVAEVSEVAKGALSAVVADSRGVTVDKMTELRKAGREAGVYMRVVRNTLLRRVVEGTQFECLKDTFVGPTLIAYSMEHPGAAARLFKEFAKANAKFEVKAAAFEGELIPASQIDRLATLPTYEEAIARLMATMKEASAGKLVRTLAAVRDAKEAA</sequence>
<name>RL10_SALEP</name>
<evidence type="ECO:0000255" key="1">
    <source>
        <dbReference type="HAMAP-Rule" id="MF_00362"/>
    </source>
</evidence>
<evidence type="ECO:0000305" key="2"/>
<comment type="function">
    <text evidence="1">Forms part of the ribosomal stalk, playing a central role in the interaction of the ribosome with GTP-bound translation factors.</text>
</comment>
<comment type="subunit">
    <text evidence="1">Part of the ribosomal stalk of the 50S ribosomal subunit. The N-terminus interacts with L11 and the large rRNA to form the base of the stalk. The C-terminus forms an elongated spine to which L12 dimers bind in a sequential fashion forming a multimeric L10(L12)X complex.</text>
</comment>
<comment type="similarity">
    <text evidence="1">Belongs to the universal ribosomal protein uL10 family.</text>
</comment>